<feature type="chain" id="PRO_0000208770" description="Uncharacterized transporter Cgl0590/cg0683">
    <location>
        <begin position="1"/>
        <end position="533"/>
    </location>
</feature>
<feature type="transmembrane region" description="Helical" evidence="1">
    <location>
        <begin position="4"/>
        <end position="23"/>
    </location>
</feature>
<feature type="transmembrane region" description="Helical" evidence="1">
    <location>
        <begin position="28"/>
        <end position="47"/>
    </location>
</feature>
<feature type="transmembrane region" description="Helical" evidence="1">
    <location>
        <begin position="57"/>
        <end position="79"/>
    </location>
</feature>
<feature type="transmembrane region" description="Helical" evidence="1">
    <location>
        <begin position="86"/>
        <end position="108"/>
    </location>
</feature>
<feature type="transmembrane region" description="Helical" evidence="1">
    <location>
        <begin position="151"/>
        <end position="173"/>
    </location>
</feature>
<feature type="transmembrane region" description="Helical" evidence="1">
    <location>
        <begin position="352"/>
        <end position="374"/>
    </location>
</feature>
<feature type="transmembrane region" description="Helical" evidence="1">
    <location>
        <begin position="379"/>
        <end position="401"/>
    </location>
</feature>
<feature type="transmembrane region" description="Helical" evidence="1">
    <location>
        <begin position="422"/>
        <end position="444"/>
    </location>
</feature>
<feature type="transmembrane region" description="Helical" evidence="1">
    <location>
        <begin position="454"/>
        <end position="476"/>
    </location>
</feature>
<feature type="domain" description="RCK C-terminal" evidence="2">
    <location>
        <begin position="263"/>
        <end position="347"/>
    </location>
</feature>
<name>Y590_CORGL</name>
<sequence>MLDFLAANPLIALVVILAVGLAIGQIRVFGLSLGAAAVLFVALVVSTANTDIVIPMIVYQLGLAMFVYVIGLSAGPAFFSEFAKKGWKLTIFMLLLLATLIGLAWVLIKSLGLDAAIGTGMFTGALTSTPGMAAVVELIEGIDPSLASEPVIGYSLAYPGAVLGSIVVAAVGAKLLKVNHREDARKEGMITAPLVWKGVQLKPGITGRVGDLPRLAGESIIATRIVDDPHTHRLADPDLPITEGMELLINGTEEAVDRAIKALGEERETKIEDTELIYTRLTVSSPEVAGRTVAELDTVAHGFMIARIRQGDSEVVPKPDTVINYSDRIRVVVAPGRVAEVRRFLGDSEKSLADVNLLPLAIGLSLGLLLGAIPIPLPGGTTMSLGFGGGPIIAGLILGALKHTGPLTWQMPFHANRTISTLGLALFLAGVGTSAGAGFRAALTDSSSLIYMAGGLVITLASALLCAVIGMWVLRLRWDEAMGVAAGTTTNPAIISYLNGQTGTDLANRGYATVYPTAMIGKILGAQILFLLL</sequence>
<organism>
    <name type="scientific">Corynebacterium glutamicum (strain ATCC 13032 / DSM 20300 / JCM 1318 / BCRC 11384 / CCUG 27702 / LMG 3730 / NBRC 12168 / NCIMB 10025 / NRRL B-2784 / 534)</name>
    <dbReference type="NCBI Taxonomy" id="196627"/>
    <lineage>
        <taxon>Bacteria</taxon>
        <taxon>Bacillati</taxon>
        <taxon>Actinomycetota</taxon>
        <taxon>Actinomycetes</taxon>
        <taxon>Mycobacteriales</taxon>
        <taxon>Corynebacteriaceae</taxon>
        <taxon>Corynebacterium</taxon>
    </lineage>
</organism>
<proteinExistence type="inferred from homology"/>
<accession>Q8NSS8</accession>
<accession>Q6M7H3</accession>
<keyword id="KW-1003">Cell membrane</keyword>
<keyword id="KW-0472">Membrane</keyword>
<keyword id="KW-1185">Reference proteome</keyword>
<keyword id="KW-0812">Transmembrane</keyword>
<keyword id="KW-1133">Transmembrane helix</keyword>
<keyword id="KW-0813">Transport</keyword>
<reference key="1">
    <citation type="journal article" date="2003" name="Appl. Microbiol. Biotechnol.">
        <title>The Corynebacterium glutamicum genome: features and impacts on biotechnological processes.</title>
        <authorList>
            <person name="Ikeda M."/>
            <person name="Nakagawa S."/>
        </authorList>
    </citation>
    <scope>NUCLEOTIDE SEQUENCE [LARGE SCALE GENOMIC DNA]</scope>
    <source>
        <strain>ATCC 13032 / DSM 20300 / JCM 1318 / BCRC 11384 / CCUG 27702 / LMG 3730 / NBRC 12168 / NCIMB 10025 / NRRL B-2784 / 534</strain>
    </source>
</reference>
<reference key="2">
    <citation type="journal article" date="2003" name="J. Biotechnol.">
        <title>The complete Corynebacterium glutamicum ATCC 13032 genome sequence and its impact on the production of L-aspartate-derived amino acids and vitamins.</title>
        <authorList>
            <person name="Kalinowski J."/>
            <person name="Bathe B."/>
            <person name="Bartels D."/>
            <person name="Bischoff N."/>
            <person name="Bott M."/>
            <person name="Burkovski A."/>
            <person name="Dusch N."/>
            <person name="Eggeling L."/>
            <person name="Eikmanns B.J."/>
            <person name="Gaigalat L."/>
            <person name="Goesmann A."/>
            <person name="Hartmann M."/>
            <person name="Huthmacher K."/>
            <person name="Kraemer R."/>
            <person name="Linke B."/>
            <person name="McHardy A.C."/>
            <person name="Meyer F."/>
            <person name="Moeckel B."/>
            <person name="Pfefferle W."/>
            <person name="Puehler A."/>
            <person name="Rey D.A."/>
            <person name="Rueckert C."/>
            <person name="Rupp O."/>
            <person name="Sahm H."/>
            <person name="Wendisch V.F."/>
            <person name="Wiegraebe I."/>
            <person name="Tauch A."/>
        </authorList>
    </citation>
    <scope>NUCLEOTIDE SEQUENCE [LARGE SCALE GENOMIC DNA]</scope>
    <source>
        <strain>ATCC 13032 / DSM 20300 / JCM 1318 / BCRC 11384 / CCUG 27702 / LMG 3730 / NBRC 12168 / NCIMB 10025 / NRRL B-2784 / 534</strain>
    </source>
</reference>
<comment type="subcellular location">
    <subcellularLocation>
        <location evidence="3">Cell membrane</location>
        <topology evidence="3">Multi-pass membrane protein</topology>
    </subcellularLocation>
</comment>
<comment type="similarity">
    <text evidence="3">Belongs to the AAE transporter (TC 2.A.81) family.</text>
</comment>
<dbReference type="EMBL" id="BA000036">
    <property type="protein sequence ID" value="BAB97983.1"/>
    <property type="molecule type" value="Genomic_DNA"/>
</dbReference>
<dbReference type="EMBL" id="BX927149">
    <property type="protein sequence ID" value="CAF19295.1"/>
    <property type="molecule type" value="Genomic_DNA"/>
</dbReference>
<dbReference type="RefSeq" id="NP_599826.1">
    <property type="nucleotide sequence ID" value="NC_003450.3"/>
</dbReference>
<dbReference type="RefSeq" id="WP_011013749.1">
    <property type="nucleotide sequence ID" value="NC_006958.1"/>
</dbReference>
<dbReference type="SMR" id="Q8NSS8"/>
<dbReference type="STRING" id="196627.cg0683"/>
<dbReference type="KEGG" id="cgb:cg0683"/>
<dbReference type="KEGG" id="cgl:Cgl0590"/>
<dbReference type="PATRIC" id="fig|196627.13.peg.581"/>
<dbReference type="eggNOG" id="COG0569">
    <property type="taxonomic scope" value="Bacteria"/>
</dbReference>
<dbReference type="eggNOG" id="COG2985">
    <property type="taxonomic scope" value="Bacteria"/>
</dbReference>
<dbReference type="HOGENOM" id="CLU_035023_3_0_11"/>
<dbReference type="OrthoDB" id="9155749at2"/>
<dbReference type="BioCyc" id="CORYNE:G18NG-10152-MONOMER"/>
<dbReference type="Proteomes" id="UP000000582">
    <property type="component" value="Chromosome"/>
</dbReference>
<dbReference type="Proteomes" id="UP000001009">
    <property type="component" value="Chromosome"/>
</dbReference>
<dbReference type="GO" id="GO:0005886">
    <property type="term" value="C:plasma membrane"/>
    <property type="evidence" value="ECO:0007669"/>
    <property type="project" value="UniProtKB-SubCell"/>
</dbReference>
<dbReference type="GO" id="GO:0008324">
    <property type="term" value="F:monoatomic cation transmembrane transporter activity"/>
    <property type="evidence" value="ECO:0007669"/>
    <property type="project" value="InterPro"/>
</dbReference>
<dbReference type="GO" id="GO:0006813">
    <property type="term" value="P:potassium ion transport"/>
    <property type="evidence" value="ECO:0007669"/>
    <property type="project" value="InterPro"/>
</dbReference>
<dbReference type="Gene3D" id="3.30.70.1450">
    <property type="entry name" value="Regulator of K+ conductance, C-terminal domain"/>
    <property type="match status" value="1"/>
</dbReference>
<dbReference type="InterPro" id="IPR050144">
    <property type="entry name" value="AAE_transporter"/>
</dbReference>
<dbReference type="InterPro" id="IPR006037">
    <property type="entry name" value="RCK_C"/>
</dbReference>
<dbReference type="InterPro" id="IPR036721">
    <property type="entry name" value="RCK_C_sf"/>
</dbReference>
<dbReference type="InterPro" id="IPR006512">
    <property type="entry name" value="YidE_YbjL"/>
</dbReference>
<dbReference type="NCBIfam" id="TIGR01625">
    <property type="entry name" value="YidE_YbjL_dupl"/>
    <property type="match status" value="2"/>
</dbReference>
<dbReference type="PANTHER" id="PTHR30445">
    <property type="entry name" value="K(+)_H(+) ANTIPORTER SUBUNIT KHTT"/>
    <property type="match status" value="1"/>
</dbReference>
<dbReference type="PANTHER" id="PTHR30445:SF3">
    <property type="entry name" value="TRANSPORT PROTEIN YIDE-RELATED"/>
    <property type="match status" value="1"/>
</dbReference>
<dbReference type="Pfam" id="PF06826">
    <property type="entry name" value="Asp-Al_Ex"/>
    <property type="match status" value="2"/>
</dbReference>
<dbReference type="Pfam" id="PF02080">
    <property type="entry name" value="TrkA_C"/>
    <property type="match status" value="1"/>
</dbReference>
<dbReference type="SUPFAM" id="SSF116726">
    <property type="entry name" value="TrkA C-terminal domain-like"/>
    <property type="match status" value="1"/>
</dbReference>
<dbReference type="PROSITE" id="PS51202">
    <property type="entry name" value="RCK_C"/>
    <property type="match status" value="1"/>
</dbReference>
<evidence type="ECO:0000255" key="1"/>
<evidence type="ECO:0000255" key="2">
    <source>
        <dbReference type="PROSITE-ProRule" id="PRU00544"/>
    </source>
</evidence>
<evidence type="ECO:0000305" key="3"/>
<protein>
    <recommendedName>
        <fullName>Uncharacterized transporter Cgl0590/cg0683</fullName>
    </recommendedName>
</protein>
<gene>
    <name type="ordered locus">Cgl0590</name>
    <name type="ordered locus">cg0683</name>
</gene>